<name>KUP_CHLPM</name>
<keyword id="KW-0997">Cell inner membrane</keyword>
<keyword id="KW-1003">Cell membrane</keyword>
<keyword id="KW-0406">Ion transport</keyword>
<keyword id="KW-0472">Membrane</keyword>
<keyword id="KW-0630">Potassium</keyword>
<keyword id="KW-0633">Potassium transport</keyword>
<keyword id="KW-0769">Symport</keyword>
<keyword id="KW-0812">Transmembrane</keyword>
<keyword id="KW-1133">Transmembrane helix</keyword>
<keyword id="KW-0813">Transport</keyword>
<gene>
    <name evidence="1" type="primary">kup</name>
    <name type="ordered locus">Cvib_1660</name>
</gene>
<proteinExistence type="inferred from homology"/>
<organism>
    <name type="scientific">Chlorobium phaeovibrioides (strain DSM 265 / 1930)</name>
    <name type="common">Prosthecochloris vibrioformis (strain DSM 265)</name>
    <dbReference type="NCBI Taxonomy" id="290318"/>
    <lineage>
        <taxon>Bacteria</taxon>
        <taxon>Pseudomonadati</taxon>
        <taxon>Chlorobiota</taxon>
        <taxon>Chlorobiia</taxon>
        <taxon>Chlorobiales</taxon>
        <taxon>Chlorobiaceae</taxon>
        <taxon>Chlorobium/Pelodictyon group</taxon>
        <taxon>Chlorobium</taxon>
    </lineage>
</organism>
<sequence length="641" mass="69769">MTVNARGPEGRTDGAVPEGAGGMKKLAGISLAALGVVFGDIGTSPLYAIRECFHGDYGIAASNANILGVLSLLFWALILIVSLKYLTFIMRADNEGEGGILALTALIIGQSIKKKKDRWVLVSIGLFGASVLLGEAMITPAISVLSATEGLQIIAPAFADMVIPATVVILAGLFLFQHNGTARLGALFGPIILLWFFCLGTLGIIQIIQYPQILEAVMPWYGINFLLNNQLHGFLVLGAVFLAVTGAEALYADMGHFGRRPIRLTWVLFVLPALLLNYFGQGAFLLASPEASSHPFYALVPSWAMIPMVLLATVATVIASQALITGVYSITQQAMQLGYLPRLTVTHTSASHIGQIYVPAANWALMAATIGLVLGFGSSSRLAAAYGASMTTTMLISTILFFFVARDLWKWRPPVLWALVSLFAVVDLSFFGASMSKLFHGAWFPLAVGLLMFTLMNTWKQGRRLLMRQLQDRTLTVDGFLDSLALQEPQRVPGQAVYLTANPDIVPIALLHNLRHNKVLHSEVALFHFSSERVPRVPNSKKVEFVRLKDGFTQVVARYGFLEYPNIRQVLELANALGLNFKPEAISFFLSREKIVADEKTKILPSRKKMFALMARNALSATAYYGLPSGQVIEIGVQVQI</sequence>
<comment type="function">
    <text evidence="1">Transport of potassium into the cell. Likely operates as a K(+):H(+) symporter.</text>
</comment>
<comment type="catalytic activity">
    <reaction evidence="1">
        <text>K(+)(in) + H(+)(in) = K(+)(out) + H(+)(out)</text>
        <dbReference type="Rhea" id="RHEA:28490"/>
        <dbReference type="ChEBI" id="CHEBI:15378"/>
        <dbReference type="ChEBI" id="CHEBI:29103"/>
    </reaction>
    <physiologicalReaction direction="right-to-left" evidence="1">
        <dbReference type="Rhea" id="RHEA:28492"/>
    </physiologicalReaction>
</comment>
<comment type="subcellular location">
    <subcellularLocation>
        <location evidence="1">Cell inner membrane</location>
        <topology evidence="1">Multi-pass membrane protein</topology>
    </subcellularLocation>
</comment>
<comment type="similarity">
    <text evidence="1">Belongs to the HAK/KUP transporter (TC 2.A.72) family.</text>
</comment>
<reference key="1">
    <citation type="submission" date="2007-03" db="EMBL/GenBank/DDBJ databases">
        <title>Complete sequence of Prosthecochloris vibrioformis DSM 265.</title>
        <authorList>
            <consortium name="US DOE Joint Genome Institute"/>
            <person name="Copeland A."/>
            <person name="Lucas S."/>
            <person name="Lapidus A."/>
            <person name="Barry K."/>
            <person name="Detter J.C."/>
            <person name="Glavina del Rio T."/>
            <person name="Hammon N."/>
            <person name="Israni S."/>
            <person name="Pitluck S."/>
            <person name="Schmutz J."/>
            <person name="Larimer F."/>
            <person name="Land M."/>
            <person name="Hauser L."/>
            <person name="Mikhailova N."/>
            <person name="Li T."/>
            <person name="Overmann J."/>
            <person name="Schuster S.C."/>
            <person name="Bryant D.A."/>
            <person name="Richardson P."/>
        </authorList>
    </citation>
    <scope>NUCLEOTIDE SEQUENCE [LARGE SCALE GENOMIC DNA]</scope>
    <source>
        <strain>DSM 265 / 1930</strain>
    </source>
</reference>
<protein>
    <recommendedName>
        <fullName evidence="1">Probable potassium transport system protein Kup</fullName>
    </recommendedName>
</protein>
<feature type="chain" id="PRO_0000333310" description="Probable potassium transport system protein Kup">
    <location>
        <begin position="1"/>
        <end position="641"/>
    </location>
</feature>
<feature type="transmembrane region" description="Helical" evidence="1">
    <location>
        <begin position="29"/>
        <end position="49"/>
    </location>
</feature>
<feature type="transmembrane region" description="Helical" evidence="1">
    <location>
        <begin position="66"/>
        <end position="86"/>
    </location>
</feature>
<feature type="transmembrane region" description="Helical" evidence="1">
    <location>
        <begin position="119"/>
        <end position="139"/>
    </location>
</feature>
<feature type="transmembrane region" description="Helical" evidence="1">
    <location>
        <begin position="156"/>
        <end position="176"/>
    </location>
</feature>
<feature type="transmembrane region" description="Helical" evidence="1">
    <location>
        <begin position="185"/>
        <end position="205"/>
    </location>
</feature>
<feature type="transmembrane region" description="Helical" evidence="1">
    <location>
        <begin position="231"/>
        <end position="251"/>
    </location>
</feature>
<feature type="transmembrane region" description="Helical" evidence="1">
    <location>
        <begin position="266"/>
        <end position="286"/>
    </location>
</feature>
<feature type="transmembrane region" description="Helical" evidence="1">
    <location>
        <begin position="298"/>
        <end position="318"/>
    </location>
</feature>
<feature type="transmembrane region" description="Helical" evidence="1">
    <location>
        <begin position="356"/>
        <end position="376"/>
    </location>
</feature>
<feature type="transmembrane region" description="Helical" evidence="1">
    <location>
        <begin position="384"/>
        <end position="404"/>
    </location>
</feature>
<feature type="transmembrane region" description="Helical" evidence="1">
    <location>
        <begin position="415"/>
        <end position="435"/>
    </location>
</feature>
<feature type="transmembrane region" description="Helical" evidence="1">
    <location>
        <begin position="438"/>
        <end position="458"/>
    </location>
</feature>
<evidence type="ECO:0000255" key="1">
    <source>
        <dbReference type="HAMAP-Rule" id="MF_01522"/>
    </source>
</evidence>
<accession>A4SGR1</accession>
<dbReference type="EMBL" id="CP000607">
    <property type="protein sequence ID" value="ABP37670.1"/>
    <property type="molecule type" value="Genomic_DNA"/>
</dbReference>
<dbReference type="KEGG" id="pvi:Cvib_1660"/>
<dbReference type="eggNOG" id="COG3158">
    <property type="taxonomic scope" value="Bacteria"/>
</dbReference>
<dbReference type="HOGENOM" id="CLU_008142_4_2_10"/>
<dbReference type="OrthoDB" id="9805577at2"/>
<dbReference type="GO" id="GO:0005886">
    <property type="term" value="C:plasma membrane"/>
    <property type="evidence" value="ECO:0007669"/>
    <property type="project" value="UniProtKB-SubCell"/>
</dbReference>
<dbReference type="GO" id="GO:0015079">
    <property type="term" value="F:potassium ion transmembrane transporter activity"/>
    <property type="evidence" value="ECO:0007669"/>
    <property type="project" value="UniProtKB-UniRule"/>
</dbReference>
<dbReference type="GO" id="GO:0015293">
    <property type="term" value="F:symporter activity"/>
    <property type="evidence" value="ECO:0007669"/>
    <property type="project" value="UniProtKB-UniRule"/>
</dbReference>
<dbReference type="HAMAP" id="MF_01522">
    <property type="entry name" value="Kup"/>
    <property type="match status" value="1"/>
</dbReference>
<dbReference type="InterPro" id="IPR003855">
    <property type="entry name" value="K+_transporter"/>
</dbReference>
<dbReference type="InterPro" id="IPR053952">
    <property type="entry name" value="K_trans_C"/>
</dbReference>
<dbReference type="InterPro" id="IPR053951">
    <property type="entry name" value="K_trans_N"/>
</dbReference>
<dbReference type="InterPro" id="IPR023051">
    <property type="entry name" value="Kup"/>
</dbReference>
<dbReference type="PANTHER" id="PTHR30540:SF79">
    <property type="entry name" value="LOW AFFINITY POTASSIUM TRANSPORT SYSTEM PROTEIN KUP"/>
    <property type="match status" value="1"/>
</dbReference>
<dbReference type="PANTHER" id="PTHR30540">
    <property type="entry name" value="OSMOTIC STRESS POTASSIUM TRANSPORTER"/>
    <property type="match status" value="1"/>
</dbReference>
<dbReference type="Pfam" id="PF02705">
    <property type="entry name" value="K_trans"/>
    <property type="match status" value="1"/>
</dbReference>
<dbReference type="Pfam" id="PF22776">
    <property type="entry name" value="K_trans_C"/>
    <property type="match status" value="1"/>
</dbReference>